<accession>P66782</accession>
<accession>A0A1R3XY42</accession>
<accession>Q11020</accession>
<accession>X2BHF2</accession>
<organism>
    <name type="scientific">Mycobacterium bovis (strain ATCC BAA-935 / AF2122/97)</name>
    <dbReference type="NCBI Taxonomy" id="233413"/>
    <lineage>
        <taxon>Bacteria</taxon>
        <taxon>Bacillati</taxon>
        <taxon>Actinomycetota</taxon>
        <taxon>Actinomycetes</taxon>
        <taxon>Mycobacteriales</taxon>
        <taxon>Mycobacteriaceae</taxon>
        <taxon>Mycobacterium</taxon>
        <taxon>Mycobacterium tuberculosis complex</taxon>
    </lineage>
</organism>
<sequence length="247" mass="25871">MASLLNARTAVITGGAQGLGLAIGQRFVAEGARVVLGDVNLEATEVAAKRLGGDDVALAVRCDVTQADDVDILIRTAVERFGGLDVMVNNAGITRDATMRTMTEEQFDQVIAVHLKGTWNGTRLAAAIMRERKRGAIVNMSSVSGKVGMVGQTNYSAAKAGIVGMTKAAAKELAHLGIRVNAIAPGLIRSAMTEAMPQRIWDQKLAEVPMGRAGEPSEVASVAVFLASDLSSYMTGTVLDVTGGRFI</sequence>
<reference key="1">
    <citation type="journal article" date="2003" name="Proc. Natl. Acad. Sci. U.S.A.">
        <title>The complete genome sequence of Mycobacterium bovis.</title>
        <authorList>
            <person name="Garnier T."/>
            <person name="Eiglmeier K."/>
            <person name="Camus J.-C."/>
            <person name="Medina N."/>
            <person name="Mansoor H."/>
            <person name="Pryor M."/>
            <person name="Duthoy S."/>
            <person name="Grondin S."/>
            <person name="Lacroix C."/>
            <person name="Monsempe C."/>
            <person name="Simon S."/>
            <person name="Harris B."/>
            <person name="Atkin R."/>
            <person name="Doggett J."/>
            <person name="Mayes R."/>
            <person name="Keating L."/>
            <person name="Wheeler P.R."/>
            <person name="Parkhill J."/>
            <person name="Barrell B.G."/>
            <person name="Cole S.T."/>
            <person name="Gordon S.V."/>
            <person name="Hewinson R.G."/>
        </authorList>
    </citation>
    <scope>NUCLEOTIDE SEQUENCE [LARGE SCALE GENOMIC DNA]</scope>
    <source>
        <strain>ATCC BAA-935 / AF2122/97</strain>
    </source>
</reference>
<reference key="2">
    <citation type="journal article" date="2017" name="Genome Announc.">
        <title>Updated reference genome sequence and annotation of Mycobacterium bovis AF2122/97.</title>
        <authorList>
            <person name="Malone K.M."/>
            <person name="Farrell D."/>
            <person name="Stuber T.P."/>
            <person name="Schubert O.T."/>
            <person name="Aebersold R."/>
            <person name="Robbe-Austerman S."/>
            <person name="Gordon S.V."/>
        </authorList>
    </citation>
    <scope>NUCLEOTIDE SEQUENCE [LARGE SCALE GENOMIC DNA]</scope>
    <scope>GENOME REANNOTATION</scope>
    <source>
        <strain>ATCC BAA-935 / AF2122/97</strain>
    </source>
</reference>
<gene>
    <name type="primary">fabG2</name>
    <name type="ordered locus">BQ2027_MB1385</name>
</gene>
<name>Y1385_MYCBO</name>
<comment type="similarity">
    <text evidence="4">Belongs to the short-chain dehydrogenases/reductases (SDR) family.</text>
</comment>
<proteinExistence type="inferred from homology"/>
<protein>
    <recommendedName>
        <fullName>Uncharacterized oxidoreductase Mb1385</fullName>
        <ecNumber>1.-.-.-</ecNumber>
    </recommendedName>
</protein>
<dbReference type="EC" id="1.-.-.-"/>
<dbReference type="EMBL" id="LT708304">
    <property type="protein sequence ID" value="SIT99988.1"/>
    <property type="molecule type" value="Genomic_DNA"/>
</dbReference>
<dbReference type="RefSeq" id="NP_855039.1">
    <property type="nucleotide sequence ID" value="NC_002945.3"/>
</dbReference>
<dbReference type="SMR" id="P66782"/>
<dbReference type="KEGG" id="mbo:BQ2027_MB1385"/>
<dbReference type="PATRIC" id="fig|233413.5.peg.1517"/>
<dbReference type="Proteomes" id="UP000001419">
    <property type="component" value="Chromosome"/>
</dbReference>
<dbReference type="GO" id="GO:0016616">
    <property type="term" value="F:oxidoreductase activity, acting on the CH-OH group of donors, NAD or NADP as acceptor"/>
    <property type="evidence" value="ECO:0007669"/>
    <property type="project" value="TreeGrafter"/>
</dbReference>
<dbReference type="GO" id="GO:0030497">
    <property type="term" value="P:fatty acid elongation"/>
    <property type="evidence" value="ECO:0007669"/>
    <property type="project" value="TreeGrafter"/>
</dbReference>
<dbReference type="FunFam" id="3.40.50.720:FF:000173">
    <property type="entry name" value="3-oxoacyl-[acyl-carrier protein] reductase"/>
    <property type="match status" value="1"/>
</dbReference>
<dbReference type="Gene3D" id="3.40.50.720">
    <property type="entry name" value="NAD(P)-binding Rossmann-like Domain"/>
    <property type="match status" value="1"/>
</dbReference>
<dbReference type="InterPro" id="IPR036291">
    <property type="entry name" value="NAD(P)-bd_dom_sf"/>
</dbReference>
<dbReference type="InterPro" id="IPR020904">
    <property type="entry name" value="Sc_DH/Rdtase_CS"/>
</dbReference>
<dbReference type="InterPro" id="IPR002347">
    <property type="entry name" value="SDR_fam"/>
</dbReference>
<dbReference type="NCBIfam" id="NF004198">
    <property type="entry name" value="PRK05653.1-3"/>
    <property type="match status" value="1"/>
</dbReference>
<dbReference type="NCBIfam" id="NF005559">
    <property type="entry name" value="PRK07231.1"/>
    <property type="match status" value="1"/>
</dbReference>
<dbReference type="NCBIfam" id="NF009466">
    <property type="entry name" value="PRK12826.1-2"/>
    <property type="match status" value="1"/>
</dbReference>
<dbReference type="PANTHER" id="PTHR42760:SF40">
    <property type="entry name" value="3-OXOACYL-[ACYL-CARRIER-PROTEIN] REDUCTASE, CHLOROPLASTIC"/>
    <property type="match status" value="1"/>
</dbReference>
<dbReference type="PANTHER" id="PTHR42760">
    <property type="entry name" value="SHORT-CHAIN DEHYDROGENASES/REDUCTASES FAMILY MEMBER"/>
    <property type="match status" value="1"/>
</dbReference>
<dbReference type="Pfam" id="PF13561">
    <property type="entry name" value="adh_short_C2"/>
    <property type="match status" value="1"/>
</dbReference>
<dbReference type="PRINTS" id="PR00081">
    <property type="entry name" value="GDHRDH"/>
</dbReference>
<dbReference type="PRINTS" id="PR00080">
    <property type="entry name" value="SDRFAMILY"/>
</dbReference>
<dbReference type="SMART" id="SM00822">
    <property type="entry name" value="PKS_KR"/>
    <property type="match status" value="1"/>
</dbReference>
<dbReference type="SUPFAM" id="SSF51735">
    <property type="entry name" value="NAD(P)-binding Rossmann-fold domains"/>
    <property type="match status" value="1"/>
</dbReference>
<dbReference type="PROSITE" id="PS00061">
    <property type="entry name" value="ADH_SHORT"/>
    <property type="match status" value="1"/>
</dbReference>
<keyword id="KW-0520">NAD</keyword>
<keyword id="KW-0560">Oxidoreductase</keyword>
<keyword id="KW-1185">Reference proteome</keyword>
<evidence type="ECO:0000250" key="1"/>
<evidence type="ECO:0000250" key="2">
    <source>
        <dbReference type="UniProtKB" id="Q99714"/>
    </source>
</evidence>
<evidence type="ECO:0000255" key="3">
    <source>
        <dbReference type="PROSITE-ProRule" id="PRU10001"/>
    </source>
</evidence>
<evidence type="ECO:0000305" key="4"/>
<feature type="chain" id="PRO_0000054859" description="Uncharacterized oxidoreductase Mb1385">
    <location>
        <begin position="1"/>
        <end position="247"/>
    </location>
</feature>
<feature type="active site" description="Proton acceptor" evidence="3">
    <location>
        <position position="155"/>
    </location>
</feature>
<feature type="binding site" evidence="2">
    <location>
        <position position="19"/>
    </location>
    <ligand>
        <name>NAD(+)</name>
        <dbReference type="ChEBI" id="CHEBI:57540"/>
    </ligand>
</feature>
<feature type="binding site" evidence="2">
    <location>
        <position position="38"/>
    </location>
    <ligand>
        <name>NAD(+)</name>
        <dbReference type="ChEBI" id="CHEBI:57540"/>
    </ligand>
</feature>
<feature type="binding site" evidence="2">
    <location>
        <position position="63"/>
    </location>
    <ligand>
        <name>NAD(+)</name>
        <dbReference type="ChEBI" id="CHEBI:57540"/>
    </ligand>
</feature>
<feature type="binding site" evidence="2">
    <location>
        <position position="64"/>
    </location>
    <ligand>
        <name>NAD(+)</name>
        <dbReference type="ChEBI" id="CHEBI:57540"/>
    </ligand>
</feature>
<feature type="binding site" evidence="1">
    <location>
        <position position="142"/>
    </location>
    <ligand>
        <name>substrate</name>
    </ligand>
</feature>
<feature type="binding site" evidence="2">
    <location>
        <position position="155"/>
    </location>
    <ligand>
        <name>NAD(+)</name>
        <dbReference type="ChEBI" id="CHEBI:57540"/>
    </ligand>
</feature>
<feature type="binding site" evidence="2">
    <location>
        <position position="159"/>
    </location>
    <ligand>
        <name>NAD(+)</name>
        <dbReference type="ChEBI" id="CHEBI:57540"/>
    </ligand>
</feature>
<feature type="binding site" evidence="2">
    <location>
        <position position="190"/>
    </location>
    <ligand>
        <name>NAD(+)</name>
        <dbReference type="ChEBI" id="CHEBI:57540"/>
    </ligand>
</feature>